<organism>
    <name type="scientific">Bos taurus</name>
    <name type="common">Bovine</name>
    <dbReference type="NCBI Taxonomy" id="9913"/>
    <lineage>
        <taxon>Eukaryota</taxon>
        <taxon>Metazoa</taxon>
        <taxon>Chordata</taxon>
        <taxon>Craniata</taxon>
        <taxon>Vertebrata</taxon>
        <taxon>Euteleostomi</taxon>
        <taxon>Mammalia</taxon>
        <taxon>Eutheria</taxon>
        <taxon>Laurasiatheria</taxon>
        <taxon>Artiodactyla</taxon>
        <taxon>Ruminantia</taxon>
        <taxon>Pecora</taxon>
        <taxon>Bovidae</taxon>
        <taxon>Bovinae</taxon>
        <taxon>Bos</taxon>
    </lineage>
</organism>
<dbReference type="EC" id="2.3.1.155" evidence="2"/>
<dbReference type="EC" id="2.3.1.176" evidence="2"/>
<dbReference type="EC" id="2.3.1.16" evidence="2"/>
<dbReference type="EMBL" id="BC103370">
    <property type="protein sequence ID" value="AAI03371.1"/>
    <property type="molecule type" value="mRNA"/>
</dbReference>
<dbReference type="RefSeq" id="NP_001029162.2">
    <molecule id="P07857-1"/>
    <property type="nucleotide sequence ID" value="NM_001033990.3"/>
</dbReference>
<dbReference type="SMR" id="P07857"/>
<dbReference type="FunCoup" id="P07857">
    <property type="interactions" value="1594"/>
</dbReference>
<dbReference type="STRING" id="9913.ENSBTAP00000004879"/>
<dbReference type="PaxDb" id="9913-ENSBTAP00000004879"/>
<dbReference type="PeptideAtlas" id="P07857"/>
<dbReference type="GeneID" id="508918"/>
<dbReference type="KEGG" id="bta:508918"/>
<dbReference type="CTD" id="6342"/>
<dbReference type="eggNOG" id="KOG1406">
    <property type="taxonomic scope" value="Eukaryota"/>
</dbReference>
<dbReference type="eggNOG" id="KOG4170">
    <property type="taxonomic scope" value="Eukaryota"/>
</dbReference>
<dbReference type="InParanoid" id="P07857"/>
<dbReference type="OrthoDB" id="542135at2759"/>
<dbReference type="Proteomes" id="UP000009136">
    <property type="component" value="Unplaced"/>
</dbReference>
<dbReference type="GO" id="GO:0005737">
    <property type="term" value="C:cytoplasm"/>
    <property type="evidence" value="ECO:0000250"/>
    <property type="project" value="UniProtKB"/>
</dbReference>
<dbReference type="GO" id="GO:0005783">
    <property type="term" value="C:endoplasmic reticulum"/>
    <property type="evidence" value="ECO:0000250"/>
    <property type="project" value="UniProtKB"/>
</dbReference>
<dbReference type="GO" id="GO:0005739">
    <property type="term" value="C:mitochondrion"/>
    <property type="evidence" value="ECO:0000250"/>
    <property type="project" value="UniProtKB"/>
</dbReference>
<dbReference type="GO" id="GO:0005782">
    <property type="term" value="C:peroxisomal matrix"/>
    <property type="evidence" value="ECO:0000250"/>
    <property type="project" value="UniProtKB"/>
</dbReference>
<dbReference type="GO" id="GO:0005777">
    <property type="term" value="C:peroxisome"/>
    <property type="evidence" value="ECO:0000250"/>
    <property type="project" value="UniProtKB"/>
</dbReference>
<dbReference type="GO" id="GO:0003985">
    <property type="term" value="F:acetyl-CoA C-acetyltransferase activity"/>
    <property type="evidence" value="ECO:0000318"/>
    <property type="project" value="GO_Central"/>
</dbReference>
<dbReference type="GO" id="GO:0003988">
    <property type="term" value="F:acetyl-CoA C-acyltransferase activity"/>
    <property type="evidence" value="ECO:0000250"/>
    <property type="project" value="UniProtKB"/>
</dbReference>
<dbReference type="GO" id="GO:0050633">
    <property type="term" value="F:acetyl-CoA C-myristoyltransferase activity"/>
    <property type="evidence" value="ECO:0000250"/>
    <property type="project" value="UniProtKB"/>
</dbReference>
<dbReference type="GO" id="GO:0120020">
    <property type="term" value="F:cholesterol transfer activity"/>
    <property type="evidence" value="ECO:0000250"/>
    <property type="project" value="UniProtKB"/>
</dbReference>
<dbReference type="GO" id="GO:0008289">
    <property type="term" value="F:lipid binding"/>
    <property type="evidence" value="ECO:0007669"/>
    <property type="project" value="UniProtKB-KW"/>
</dbReference>
<dbReference type="GO" id="GO:0120019">
    <property type="term" value="F:phosphatidylcholine transfer activity"/>
    <property type="evidence" value="ECO:0000250"/>
    <property type="project" value="UniProtKB"/>
</dbReference>
<dbReference type="GO" id="GO:0033814">
    <property type="term" value="F:propanoyl-CoA C-acyltransferase activity"/>
    <property type="evidence" value="ECO:0007669"/>
    <property type="project" value="RHEA"/>
</dbReference>
<dbReference type="GO" id="GO:0050632">
    <property type="term" value="F:propionyl-CoA C2-trimethyltridecanoyltransferase activity"/>
    <property type="evidence" value="ECO:0000250"/>
    <property type="project" value="UniProtKB"/>
</dbReference>
<dbReference type="GO" id="GO:0008206">
    <property type="term" value="P:bile acid metabolic process"/>
    <property type="evidence" value="ECO:0000250"/>
    <property type="project" value="UniProtKB"/>
</dbReference>
<dbReference type="GO" id="GO:0006635">
    <property type="term" value="P:fatty acid beta-oxidation"/>
    <property type="evidence" value="ECO:0000250"/>
    <property type="project" value="UniProtKB"/>
</dbReference>
<dbReference type="GO" id="GO:0032367">
    <property type="term" value="P:intracellular cholesterol transport"/>
    <property type="evidence" value="ECO:0000250"/>
    <property type="project" value="UniProtKB"/>
</dbReference>
<dbReference type="GO" id="GO:1901373">
    <property type="term" value="P:lipid hydroperoxide transport"/>
    <property type="evidence" value="ECO:0000314"/>
    <property type="project" value="UniProtKB"/>
</dbReference>
<dbReference type="GO" id="GO:0032385">
    <property type="term" value="P:positive regulation of intracellular cholesterol transport"/>
    <property type="evidence" value="ECO:0000314"/>
    <property type="project" value="UniProtKB"/>
</dbReference>
<dbReference type="GO" id="GO:0071071">
    <property type="term" value="P:regulation of phospholipid biosynthetic process"/>
    <property type="evidence" value="ECO:0000250"/>
    <property type="project" value="UniProtKB"/>
</dbReference>
<dbReference type="CDD" id="cd00826">
    <property type="entry name" value="nondecarbox_cond_enzymes"/>
    <property type="match status" value="1"/>
</dbReference>
<dbReference type="FunFam" id="3.40.47.10:FF:000016">
    <property type="entry name" value="Non-specific lipid-transfer protein"/>
    <property type="match status" value="1"/>
</dbReference>
<dbReference type="FunFam" id="3.30.1050.10:FF:000001">
    <property type="entry name" value="Putative Non-specific lipid-transfer protein"/>
    <property type="match status" value="1"/>
</dbReference>
<dbReference type="Gene3D" id="3.40.47.10">
    <property type="match status" value="1"/>
</dbReference>
<dbReference type="Gene3D" id="3.30.1050.10">
    <property type="entry name" value="SCP2 sterol-binding domain"/>
    <property type="match status" value="1"/>
</dbReference>
<dbReference type="InterPro" id="IPR003033">
    <property type="entry name" value="SCP2_sterol-bd_dom"/>
</dbReference>
<dbReference type="InterPro" id="IPR036527">
    <property type="entry name" value="SCP2_sterol-bd_dom_sf"/>
</dbReference>
<dbReference type="InterPro" id="IPR016039">
    <property type="entry name" value="Thiolase-like"/>
</dbReference>
<dbReference type="InterPro" id="IPR020615">
    <property type="entry name" value="Thiolase_acyl_enz_int_AS"/>
</dbReference>
<dbReference type="InterPro" id="IPR055140">
    <property type="entry name" value="Thiolase_C_2"/>
</dbReference>
<dbReference type="InterPro" id="IPR020613">
    <property type="entry name" value="Thiolase_CS"/>
</dbReference>
<dbReference type="InterPro" id="IPR020616">
    <property type="entry name" value="Thiolase_N"/>
</dbReference>
<dbReference type="NCBIfam" id="NF006102">
    <property type="entry name" value="PRK08256.1"/>
    <property type="match status" value="1"/>
</dbReference>
<dbReference type="PANTHER" id="PTHR42870">
    <property type="entry name" value="ACETYL-COA C-ACETYLTRANSFERASE"/>
    <property type="match status" value="1"/>
</dbReference>
<dbReference type="PANTHER" id="PTHR42870:SF1">
    <property type="entry name" value="NON-SPECIFIC LIPID-TRANSFER PROTEIN-LIKE 2"/>
    <property type="match status" value="1"/>
</dbReference>
<dbReference type="Pfam" id="PF02036">
    <property type="entry name" value="SCP2"/>
    <property type="match status" value="1"/>
</dbReference>
<dbReference type="Pfam" id="PF22691">
    <property type="entry name" value="Thiolase_C_1"/>
    <property type="match status" value="1"/>
</dbReference>
<dbReference type="Pfam" id="PF00108">
    <property type="entry name" value="Thiolase_N"/>
    <property type="match status" value="1"/>
</dbReference>
<dbReference type="SUPFAM" id="SSF55718">
    <property type="entry name" value="SCP-like"/>
    <property type="match status" value="1"/>
</dbReference>
<dbReference type="SUPFAM" id="SSF53901">
    <property type="entry name" value="Thiolase-like"/>
    <property type="match status" value="2"/>
</dbReference>
<dbReference type="PROSITE" id="PS00098">
    <property type="entry name" value="THIOLASE_1"/>
    <property type="match status" value="1"/>
</dbReference>
<dbReference type="PROSITE" id="PS00737">
    <property type="entry name" value="THIOLASE_2"/>
    <property type="match status" value="1"/>
</dbReference>
<evidence type="ECO:0000250" key="1">
    <source>
        <dbReference type="UniProtKB" id="O62742"/>
    </source>
</evidence>
<evidence type="ECO:0000250" key="2">
    <source>
        <dbReference type="UniProtKB" id="P11915"/>
    </source>
</evidence>
<evidence type="ECO:0000250" key="3">
    <source>
        <dbReference type="UniProtKB" id="P22307"/>
    </source>
</evidence>
<evidence type="ECO:0000250" key="4">
    <source>
        <dbReference type="UniProtKB" id="P32020"/>
    </source>
</evidence>
<evidence type="ECO:0000255" key="5"/>
<evidence type="ECO:0000305" key="6"/>
<accession>P07857</accession>
<accession>Q3SYV0</accession>
<reference key="1">
    <citation type="submission" date="2005-08" db="EMBL/GenBank/DDBJ databases">
        <authorList>
            <consortium name="NIH - Mammalian Gene Collection (MGC) project"/>
        </authorList>
    </citation>
    <scope>NUCLEOTIDE SEQUENCE [LARGE SCALE MRNA]</scope>
    <source>
        <strain>Crossbred X Angus</strain>
        <tissue>Ileum</tissue>
    </source>
</reference>
<reference key="2">
    <citation type="journal article" date="1985" name="Biochem. Biophys. Res. Commun.">
        <title>The primary structure of the nonspecific lipid transfer protein (sterol carrier protein 2) from bovine liver.</title>
        <authorList>
            <person name="Westerman J."/>
            <person name="Wirtz K.W.A."/>
        </authorList>
    </citation>
    <scope>PROTEIN SEQUENCE OF 421-541</scope>
    <source>
        <tissue>Liver</tissue>
    </source>
</reference>
<keyword id="KW-0007">Acetylation</keyword>
<keyword id="KW-0012">Acyltransferase</keyword>
<keyword id="KW-0024">Alternative initiation</keyword>
<keyword id="KW-0963">Cytoplasm</keyword>
<keyword id="KW-0903">Direct protein sequencing</keyword>
<keyword id="KW-0256">Endoplasmic reticulum</keyword>
<keyword id="KW-0443">Lipid metabolism</keyword>
<keyword id="KW-0445">Lipid transport</keyword>
<keyword id="KW-0446">Lipid-binding</keyword>
<keyword id="KW-0496">Mitochondrion</keyword>
<keyword id="KW-0576">Peroxisome</keyword>
<keyword id="KW-0597">Phosphoprotein</keyword>
<keyword id="KW-1185">Reference proteome</keyword>
<keyword id="KW-0808">Transferase</keyword>
<keyword id="KW-0813">Transport</keyword>
<sequence>MSLVASQSPLRNRVFVVGVGMTKFTKPGVENRDYPDLAKEAGQKALADAQIPYSAVEQACIGYVYGDSTSGQRAIYHSLGLTGIPIINVNNNCSTGSTALFMARQLIQGGLADCVLALGFEKMVKGPIAVNIQDKANPIDKHIEVMVNKYGLSPSPVAPQMFGNAGKEHMEKYGTTLEHFAKIGWKNHKHSVNNPYSQFQKEYSLDEVMTSRKIFDFLTVLQCCPTSDGAAAAILASEAFVQKHNLKPKAVEILAQEMVTDMPSSFEGKSIIKMVGFDMSKEAARRCYEKSGLRPSDIDVIELHDCFSANELITYEALGLCPEGQGGKLVERGDNTYGGKWVINPSGGLISKGHPLGATGLAQCVELCWHLRGEAGKRQVPGAKVALQHNIGIGGAVVVTLYKMGFPEAARTHQIEAAPTSSSVDGFKANLVFKEIEKKLEDEGEQFVKKIGGIFAFKVKDGPGGKEATWVVDVKNGKGSVLPNSDKKADCTITMADSDLLALMTGKMNPQTAFFQGKLKINGNMGLAMKLQNLQLQPGKAKL</sequence>
<feature type="chain" id="PRO_0000045842" description="Sterol carrier protein 2">
    <location>
        <begin position="1"/>
        <end position="543"/>
    </location>
</feature>
<feature type="domain" description="SCP2">
    <location>
        <begin position="429"/>
        <end position="539"/>
    </location>
</feature>
<feature type="short sequence motif" description="Microbody targeting signal" evidence="5">
    <location>
        <begin position="541"/>
        <end position="543"/>
    </location>
</feature>
<feature type="modified residue" description="Phosphoserine" evidence="4">
    <location>
        <position position="8"/>
    </location>
</feature>
<feature type="modified residue" description="N6-succinyllysine" evidence="4">
    <location>
        <position position="39"/>
    </location>
</feature>
<feature type="modified residue" description="N6-succinyllysine" evidence="4">
    <location>
        <position position="167"/>
    </location>
</feature>
<feature type="modified residue" description="N6-acetyllysine" evidence="4">
    <location>
        <position position="172"/>
    </location>
</feature>
<feature type="modified residue" description="N6-acetyllysine; alternate" evidence="3">
    <location>
        <position position="182"/>
    </location>
</feature>
<feature type="modified residue" description="N6-succinyllysine; alternate" evidence="4">
    <location>
        <position position="182"/>
    </location>
</feature>
<feature type="modified residue" description="N6-succinyllysine" evidence="4">
    <location>
        <position position="281"/>
    </location>
</feature>
<feature type="modified residue" description="N6-acetyllysine; alternate" evidence="4">
    <location>
        <position position="340"/>
    </location>
</feature>
<feature type="modified residue" description="N6-succinyllysine; alternate" evidence="4">
    <location>
        <position position="340"/>
    </location>
</feature>
<feature type="modified residue" description="N6-acetyllysine; alternate" evidence="4">
    <location>
        <position position="428"/>
    </location>
</feature>
<feature type="modified residue" description="N6-succinyllysine; alternate" evidence="4">
    <location>
        <position position="428"/>
    </location>
</feature>
<feature type="modified residue" description="N6-acetyllysine; alternate" evidence="3">
    <location>
        <position position="434"/>
    </location>
</feature>
<feature type="modified residue" description="N6-succinyllysine; alternate" evidence="4">
    <location>
        <position position="434"/>
    </location>
</feature>
<feature type="modified residue" description="N6-acetyllysine; alternate" evidence="4">
    <location>
        <position position="439"/>
    </location>
</feature>
<feature type="modified residue" description="N6-succinyllysine; alternate" evidence="4">
    <location>
        <position position="439"/>
    </location>
</feature>
<feature type="modified residue" description="N6-acetyllysine; alternate" evidence="4">
    <location>
        <position position="449"/>
    </location>
</feature>
<feature type="modified residue" description="N6-succinyllysine; alternate" evidence="4">
    <location>
        <position position="449"/>
    </location>
</feature>
<feature type="modified residue" description="N6-succinyllysine" evidence="4">
    <location>
        <position position="460"/>
    </location>
</feature>
<feature type="modified residue" description="N6-acetyllysine; alternate" evidence="3">
    <location>
        <position position="466"/>
    </location>
</feature>
<feature type="modified residue" description="N6-succinyllysine; alternate" evidence="4">
    <location>
        <position position="466"/>
    </location>
</feature>
<feature type="modified residue" description="N6-succinyllysine" evidence="4">
    <location>
        <position position="475"/>
    </location>
</feature>
<feature type="modified residue" description="N6-acetyllysine" evidence="4">
    <location>
        <position position="487"/>
    </location>
</feature>
<feature type="modified residue" description="N6-succinyllysine" evidence="4">
    <location>
        <position position="488"/>
    </location>
</feature>
<feature type="modified residue" description="N6-succinyllysine" evidence="4">
    <location>
        <position position="507"/>
    </location>
</feature>
<feature type="modified residue" description="N6-succinyllysine" evidence="4">
    <location>
        <position position="518"/>
    </location>
</feature>
<feature type="modified residue" description="N6-succinyllysine" evidence="4">
    <location>
        <position position="530"/>
    </location>
</feature>
<feature type="modified residue" description="N6-succinyllysine" evidence="4">
    <location>
        <position position="540"/>
    </location>
</feature>
<feature type="splice variant" id="VSP_018894" description="In isoform SCP2." evidence="6">
    <location>
        <begin position="1"/>
        <end position="403"/>
    </location>
</feature>
<feature type="site" description="Cleavage" evidence="1">
    <location sequence="P07857-2">
        <begin position="20"/>
        <end position="21"/>
    </location>
</feature>
<protein>
    <recommendedName>
        <fullName evidence="6">Sterol carrier protein 2</fullName>
        <shortName>SCP-2</shortName>
    </recommendedName>
    <alternativeName>
        <fullName>Acetyl-CoA C-myristoyltransferase</fullName>
        <ecNumber evidence="2">2.3.1.155</ecNumber>
    </alternativeName>
    <alternativeName>
        <fullName>Non-specific lipid-transfer protein</fullName>
        <shortName>NSL-TP</shortName>
    </alternativeName>
    <alternativeName>
        <fullName>Propanoyl-CoA C-acyltransferase</fullName>
        <ecNumber evidence="2">2.3.1.176</ecNumber>
    </alternativeName>
    <alternativeName>
        <fullName>SCP-2/3-oxoacyl-CoA thiolase</fullName>
    </alternativeName>
    <alternativeName>
        <fullName>SCP-2/thiolase</fullName>
        <ecNumber evidence="2">2.3.1.16</ecNumber>
    </alternativeName>
    <alternativeName>
        <fullName>SCP-chi</fullName>
    </alternativeName>
    <alternativeName>
        <fullName>SCPX</fullName>
    </alternativeName>
    <alternativeName>
        <fullName>Sterol carrier protein X</fullName>
        <shortName>SCP-X</shortName>
    </alternativeName>
</protein>
<proteinExistence type="evidence at protein level"/>
<name>SCP2_BOVIN</name>
<comment type="function">
    <molecule>Isoform SCPx</molecule>
    <text evidence="2 3 4">Plays a crucial role in the peroxisomal oxidation of branched-chain fatty acids. Catalyzes the last step of the peroxisomal beta-oxidation of branched chain fatty acids and the side chain of the bile acid intermediates di- and trihydroxycoprostanic acids (DHCA and THCA) (By similarity). Also active with medium and long straight chain 3-oxoacyl-CoAs. Stimulates the microsomal conversion of 7-dehydrocholesterol to cholesterol and transfers phosphatidylcholine and 7-dehydrocholesterol between membrances, in vitro (By similarity). Isoforms SCP2 and SCPx cooperate in peroxisomal oxidation of certain naturally occurring tetramethyl-branched fatty acyl-CoAs (By similarity).</text>
</comment>
<comment type="function">
    <molecule>Isoform SCP2</molecule>
    <text evidence="2 3 4">Mediates the transfer of all common phospholipids, cholesterol and gangliosides from the endoplasmic reticulum to the plasma membrane. May play a role in regulating steroidogenesis (By similarity). Stimulates the microsomal conversion of 7-dehydrocholesterol to cholesterol (By similarity). Also binds fatty acids and fatty acyl Coenzyme A (CoA) such as phytanoyl-CoA. Involved in the regulation phospholipid synthesis in endoplasmic reticulum enhancing the incorporation of exogenous fatty acid into glycerides. Seems to stimulate the rate-limiting step in phosphatidic acid formation mediated by GPAT3. Isoforms SCP2 and SCPx cooperate in peroxisomal oxidation of certain naturally occurring tetramethyl-branched fatty acyl-CoAs (By similarity).</text>
</comment>
<comment type="catalytic activity">
    <molecule>Isoform SCPx</molecule>
    <reaction evidence="3">
        <text>choloyl-CoA + propanoyl-CoA = 3alpha,7alpha,12alpha-trihydroxy-24-oxo-5beta-cholestan-26-oyl-CoA + CoA</text>
        <dbReference type="Rhea" id="RHEA:16865"/>
        <dbReference type="ChEBI" id="CHEBI:57287"/>
        <dbReference type="ChEBI" id="CHEBI:57373"/>
        <dbReference type="ChEBI" id="CHEBI:57392"/>
        <dbReference type="ChEBI" id="CHEBI:58507"/>
        <dbReference type="EC" id="2.3.1.176"/>
    </reaction>
    <physiologicalReaction direction="right-to-left" evidence="3">
        <dbReference type="Rhea" id="RHEA:16867"/>
    </physiologicalReaction>
</comment>
<comment type="catalytic activity">
    <molecule>Isoform SCPx</molecule>
    <reaction evidence="2">
        <text>an acyl-CoA + acetyl-CoA = a 3-oxoacyl-CoA + CoA</text>
        <dbReference type="Rhea" id="RHEA:21564"/>
        <dbReference type="ChEBI" id="CHEBI:57287"/>
        <dbReference type="ChEBI" id="CHEBI:57288"/>
        <dbReference type="ChEBI" id="CHEBI:58342"/>
        <dbReference type="ChEBI" id="CHEBI:90726"/>
        <dbReference type="EC" id="2.3.1.16"/>
    </reaction>
    <physiologicalReaction direction="right-to-left" evidence="2">
        <dbReference type="Rhea" id="RHEA:21566"/>
    </physiologicalReaction>
</comment>
<comment type="catalytic activity">
    <molecule>Isoform SCPx</molecule>
    <reaction evidence="2">
        <text>hexanoyl-CoA + acetyl-CoA = 3-oxooctanoyl-CoA + CoA</text>
        <dbReference type="Rhea" id="RHEA:31203"/>
        <dbReference type="ChEBI" id="CHEBI:57287"/>
        <dbReference type="ChEBI" id="CHEBI:57288"/>
        <dbReference type="ChEBI" id="CHEBI:62619"/>
        <dbReference type="ChEBI" id="CHEBI:62620"/>
    </reaction>
    <physiologicalReaction direction="right-to-left" evidence="2">
        <dbReference type="Rhea" id="RHEA:31205"/>
    </physiologicalReaction>
</comment>
<comment type="catalytic activity">
    <molecule>Isoform SCPx</molecule>
    <reaction evidence="2">
        <text>tetradecanoyl-CoA + acetyl-CoA = 3-oxohexadecanoyl-CoA + CoA</text>
        <dbReference type="Rhea" id="RHEA:18161"/>
        <dbReference type="ChEBI" id="CHEBI:57287"/>
        <dbReference type="ChEBI" id="CHEBI:57288"/>
        <dbReference type="ChEBI" id="CHEBI:57349"/>
        <dbReference type="ChEBI" id="CHEBI:57385"/>
        <dbReference type="EC" id="2.3.1.155"/>
    </reaction>
    <physiologicalReaction direction="right-to-left" evidence="2">
        <dbReference type="Rhea" id="RHEA:18163"/>
    </physiologicalReaction>
</comment>
<comment type="catalytic activity">
    <molecule>Isoform SCPx</molecule>
    <reaction evidence="2">
        <text>3-oxohexadecanedioyl-CoA + CoA = tetradecanedioyl-CoA + acetyl-CoA</text>
        <dbReference type="Rhea" id="RHEA:40343"/>
        <dbReference type="ChEBI" id="CHEBI:57287"/>
        <dbReference type="ChEBI" id="CHEBI:57288"/>
        <dbReference type="ChEBI" id="CHEBI:77081"/>
        <dbReference type="ChEBI" id="CHEBI:77084"/>
    </reaction>
    <physiologicalReaction direction="left-to-right" evidence="2">
        <dbReference type="Rhea" id="RHEA:40344"/>
    </physiologicalReaction>
</comment>
<comment type="catalytic activity">
    <molecule>Isoform SCPx</molecule>
    <reaction evidence="2">
        <text>propanoyl-CoA + tetradecanoyl-CoA = 3-oxo-2-methylhexadecanoyl-CoA + CoA</text>
        <dbReference type="Rhea" id="RHEA:46344"/>
        <dbReference type="ChEBI" id="CHEBI:57287"/>
        <dbReference type="ChEBI" id="CHEBI:57385"/>
        <dbReference type="ChEBI" id="CHEBI:57392"/>
        <dbReference type="ChEBI" id="CHEBI:86042"/>
    </reaction>
    <physiologicalReaction direction="right-to-left" evidence="2">
        <dbReference type="Rhea" id="RHEA:46346"/>
    </physiologicalReaction>
</comment>
<comment type="catalytic activity">
    <molecule>Isoform SCPx</molecule>
    <reaction evidence="2">
        <text>butanoyl-CoA + acetyl-CoA = 3-oxohexanoyl-CoA + CoA</text>
        <dbReference type="Rhea" id="RHEA:31111"/>
        <dbReference type="ChEBI" id="CHEBI:57287"/>
        <dbReference type="ChEBI" id="CHEBI:57288"/>
        <dbReference type="ChEBI" id="CHEBI:57371"/>
        <dbReference type="ChEBI" id="CHEBI:62418"/>
    </reaction>
    <physiologicalReaction direction="right-to-left" evidence="2">
        <dbReference type="Rhea" id="RHEA:31113"/>
    </physiologicalReaction>
</comment>
<comment type="catalytic activity">
    <molecule>Isoform SCPx</molecule>
    <reaction evidence="2">
        <text>octanoyl-CoA + acetyl-CoA = 3-oxodecanoyl-CoA + CoA</text>
        <dbReference type="Rhea" id="RHEA:31087"/>
        <dbReference type="ChEBI" id="CHEBI:57287"/>
        <dbReference type="ChEBI" id="CHEBI:57288"/>
        <dbReference type="ChEBI" id="CHEBI:57386"/>
        <dbReference type="ChEBI" id="CHEBI:62548"/>
    </reaction>
    <physiologicalReaction direction="right-to-left" evidence="2">
        <dbReference type="Rhea" id="RHEA:31089"/>
    </physiologicalReaction>
</comment>
<comment type="catalytic activity">
    <molecule>Isoform SCPx</molecule>
    <reaction evidence="2">
        <text>decanoyl-CoA + acetyl-CoA = 3-oxododecanoyl-CoA + CoA</text>
        <dbReference type="Rhea" id="RHEA:31183"/>
        <dbReference type="ChEBI" id="CHEBI:57287"/>
        <dbReference type="ChEBI" id="CHEBI:57288"/>
        <dbReference type="ChEBI" id="CHEBI:61430"/>
        <dbReference type="ChEBI" id="CHEBI:62615"/>
    </reaction>
    <physiologicalReaction direction="right-to-left" evidence="2">
        <dbReference type="Rhea" id="RHEA:31185"/>
    </physiologicalReaction>
</comment>
<comment type="catalytic activity">
    <molecule>Isoform SCPx</molecule>
    <reaction evidence="2">
        <text>dodecanoyl-CoA + acetyl-CoA = 3-oxotetradecanoyl-CoA + CoA</text>
        <dbReference type="Rhea" id="RHEA:31091"/>
        <dbReference type="ChEBI" id="CHEBI:57287"/>
        <dbReference type="ChEBI" id="CHEBI:57288"/>
        <dbReference type="ChEBI" id="CHEBI:57375"/>
        <dbReference type="ChEBI" id="CHEBI:62543"/>
    </reaction>
    <physiologicalReaction direction="right-to-left" evidence="2">
        <dbReference type="Rhea" id="RHEA:31093"/>
    </physiologicalReaction>
</comment>
<comment type="catalytic activity">
    <molecule>Isoform SCPx</molecule>
    <reaction evidence="2">
        <text>hexadecanoyl-CoA + acetyl-CoA = 3-oxooctadecanoyl-CoA + CoA</text>
        <dbReference type="Rhea" id="RHEA:35279"/>
        <dbReference type="ChEBI" id="CHEBI:57287"/>
        <dbReference type="ChEBI" id="CHEBI:57288"/>
        <dbReference type="ChEBI" id="CHEBI:57379"/>
        <dbReference type="ChEBI" id="CHEBI:71407"/>
    </reaction>
    <physiologicalReaction direction="right-to-left" evidence="2">
        <dbReference type="Rhea" id="RHEA:35281"/>
    </physiologicalReaction>
</comment>
<comment type="catalytic activity">
    <molecule>Isoform SCPx</molecule>
    <reaction evidence="2">
        <text>3-oxo-(9Z-octadecenoyl)-CoA + CoA = (7Z)-hexadecenoyl-CoA + acetyl-CoA</text>
        <dbReference type="Rhea" id="RHEA:47400"/>
        <dbReference type="ChEBI" id="CHEBI:57287"/>
        <dbReference type="ChEBI" id="CHEBI:57288"/>
        <dbReference type="ChEBI" id="CHEBI:87695"/>
        <dbReference type="ChEBI" id="CHEBI:87698"/>
    </reaction>
    <physiologicalReaction direction="left-to-right" evidence="2">
        <dbReference type="Rhea" id="RHEA:47401"/>
    </physiologicalReaction>
</comment>
<comment type="catalytic activity">
    <molecule>Isoform SCPx</molecule>
    <reaction evidence="2">
        <text>7-dehydrocholesterol(in) = 7-dehydrocholesterol(out)</text>
        <dbReference type="Rhea" id="RHEA:62960"/>
        <dbReference type="ChEBI" id="CHEBI:17759"/>
    </reaction>
</comment>
<comment type="catalytic activity">
    <molecule>Isoform SCP2</molecule>
    <reaction evidence="3">
        <text>7-dehydrocholesterol(in) = 7-dehydrocholesterol(out)</text>
        <dbReference type="Rhea" id="RHEA:62960"/>
        <dbReference type="ChEBI" id="CHEBI:17759"/>
    </reaction>
</comment>
<comment type="catalytic activity">
    <molecule>Isoform SCPx</molecule>
    <reaction evidence="2">
        <text>4,8,12-trimethyltridecanoyl-CoA + propanoyl-CoA = 3-oxopristanoyl-CoA + CoA</text>
        <dbReference type="Rhea" id="RHEA:10408"/>
        <dbReference type="ChEBI" id="CHEBI:57287"/>
        <dbReference type="ChEBI" id="CHEBI:57291"/>
        <dbReference type="ChEBI" id="CHEBI:57351"/>
        <dbReference type="ChEBI" id="CHEBI:57392"/>
        <dbReference type="EC" id="2.3.1.176"/>
    </reaction>
    <physiologicalReaction direction="right-to-left" evidence="2">
        <dbReference type="Rhea" id="RHEA:10410"/>
    </physiologicalReaction>
</comment>
<comment type="subunit">
    <molecule>Isoform SCP2</molecule>
    <text evidence="3">Interacts with PEX5; the interaction is essential for peroxisomal import.</text>
</comment>
<comment type="subcellular location">
    <molecule>Isoform SCP2</molecule>
    <subcellularLocation>
        <location evidence="4">Peroxisome</location>
    </subcellularLocation>
    <subcellularLocation>
        <location evidence="3">Cytoplasm</location>
    </subcellularLocation>
    <subcellularLocation>
        <location evidence="3">Mitochondrion</location>
    </subcellularLocation>
    <subcellularLocation>
        <location evidence="4">Endoplasmic reticulum</location>
    </subcellularLocation>
    <subcellularLocation>
        <location evidence="4">Mitochondrion</location>
    </subcellularLocation>
</comment>
<comment type="subcellular location">
    <molecule>Isoform SCPx</molecule>
    <subcellularLocation>
        <location evidence="2">Peroxisome</location>
    </subcellularLocation>
</comment>
<comment type="alternative products">
    <event type="alternative initiation"/>
    <isoform>
        <id>P07857-1</id>
        <name>SCPx</name>
        <sequence type="displayed"/>
    </isoform>
    <isoform>
        <id>P07857-2</id>
        <name>SCP2</name>
        <sequence type="described" ref="VSP_018894"/>
    </isoform>
</comment>
<comment type="PTM">
    <molecule>Isoform SCP2</molecule>
    <text evidence="1">preSCP2, a protein with a molecular mass of about 15 kDa, is processed into its mature form (SCP2) by proteolytic cleavage of a 20 residue leader sequence after translocation into peroxisomes.</text>
</comment>
<comment type="miscellaneous">
    <molecule>Isoform SCP2</molecule>
    <text evidence="6">Contains a putative mitochondrial transit peptide at positions 1-20.</text>
</comment>
<gene>
    <name type="primary">SCP2</name>
</gene>